<gene>
    <name evidence="1" type="primary">atpE</name>
</gene>
<geneLocation type="chloroplast"/>
<dbReference type="EMBL" id="X72497">
    <property type="protein sequence ID" value="CAA51162.1"/>
    <property type="molecule type" value="Genomic_DNA"/>
</dbReference>
<dbReference type="EMBL" id="Z67753">
    <property type="protein sequence ID" value="CAA91738.1"/>
    <property type="molecule type" value="Genomic_DNA"/>
</dbReference>
<dbReference type="PIR" id="S78365">
    <property type="entry name" value="S78365"/>
</dbReference>
<dbReference type="RefSeq" id="NP_043706.1">
    <property type="nucleotide sequence ID" value="NC_001713.1"/>
</dbReference>
<dbReference type="SMR" id="P49648"/>
<dbReference type="GeneID" id="801744"/>
<dbReference type="GO" id="GO:0009535">
    <property type="term" value="C:chloroplast thylakoid membrane"/>
    <property type="evidence" value="ECO:0007669"/>
    <property type="project" value="UniProtKB-SubCell"/>
</dbReference>
<dbReference type="GO" id="GO:0045259">
    <property type="term" value="C:proton-transporting ATP synthase complex"/>
    <property type="evidence" value="ECO:0007669"/>
    <property type="project" value="UniProtKB-KW"/>
</dbReference>
<dbReference type="GO" id="GO:0005524">
    <property type="term" value="F:ATP binding"/>
    <property type="evidence" value="ECO:0007669"/>
    <property type="project" value="UniProtKB-UniRule"/>
</dbReference>
<dbReference type="GO" id="GO:0046933">
    <property type="term" value="F:proton-transporting ATP synthase activity, rotational mechanism"/>
    <property type="evidence" value="ECO:0007669"/>
    <property type="project" value="UniProtKB-UniRule"/>
</dbReference>
<dbReference type="CDD" id="cd12152">
    <property type="entry name" value="F1-ATPase_delta"/>
    <property type="match status" value="1"/>
</dbReference>
<dbReference type="Gene3D" id="2.60.15.10">
    <property type="entry name" value="F0F1 ATP synthase delta/epsilon subunit, N-terminal"/>
    <property type="match status" value="1"/>
</dbReference>
<dbReference type="HAMAP" id="MF_00530">
    <property type="entry name" value="ATP_synth_epsil_bac"/>
    <property type="match status" value="1"/>
</dbReference>
<dbReference type="InterPro" id="IPR001469">
    <property type="entry name" value="ATP_synth_F1_dsu/esu"/>
</dbReference>
<dbReference type="InterPro" id="IPR020546">
    <property type="entry name" value="ATP_synth_F1_dsu/esu_N"/>
</dbReference>
<dbReference type="InterPro" id="IPR036771">
    <property type="entry name" value="ATPsynth_dsu/esu_N"/>
</dbReference>
<dbReference type="NCBIfam" id="TIGR01216">
    <property type="entry name" value="ATP_synt_epsi"/>
    <property type="match status" value="1"/>
</dbReference>
<dbReference type="PANTHER" id="PTHR13822">
    <property type="entry name" value="ATP SYNTHASE DELTA/EPSILON CHAIN"/>
    <property type="match status" value="1"/>
</dbReference>
<dbReference type="PANTHER" id="PTHR13822:SF10">
    <property type="entry name" value="ATP SYNTHASE EPSILON CHAIN, CHLOROPLASTIC"/>
    <property type="match status" value="1"/>
</dbReference>
<dbReference type="Pfam" id="PF02823">
    <property type="entry name" value="ATP-synt_DE_N"/>
    <property type="match status" value="1"/>
</dbReference>
<dbReference type="SUPFAM" id="SSF51344">
    <property type="entry name" value="Epsilon subunit of F1F0-ATP synthase N-terminal domain"/>
    <property type="match status" value="1"/>
</dbReference>
<keyword id="KW-0066">ATP synthesis</keyword>
<keyword id="KW-0139">CF(1)</keyword>
<keyword id="KW-0150">Chloroplast</keyword>
<keyword id="KW-0375">Hydrogen ion transport</keyword>
<keyword id="KW-0406">Ion transport</keyword>
<keyword id="KW-0472">Membrane</keyword>
<keyword id="KW-0934">Plastid</keyword>
<keyword id="KW-0793">Thylakoid</keyword>
<keyword id="KW-0813">Transport</keyword>
<name>ATPE_TRICV</name>
<proteinExistence type="inferred from homology"/>
<protein>
    <recommendedName>
        <fullName evidence="1">ATP synthase epsilon chain, chloroplastic</fullName>
    </recommendedName>
    <alternativeName>
        <fullName evidence="1">ATP synthase F1 sector epsilon subunit</fullName>
    </alternativeName>
    <alternativeName>
        <fullName evidence="1">F-ATPase epsilon subunit</fullName>
    </alternativeName>
</protein>
<accession>P49648</accession>
<evidence type="ECO:0000255" key="1">
    <source>
        <dbReference type="HAMAP-Rule" id="MF_00530"/>
    </source>
</evidence>
<sequence>MVMNVRVLTPTRVICSTTADEVILPGLTGLVGILDGHAALITALDTGLLRIKLNEKWTPIILCGGLAEIDRNRVTVLVNDVEELVAVELNEATTELEKATLAVENAETSKARLDASIELKKAVARLEGMNYLS</sequence>
<organism>
    <name type="scientific">Trieres chinensis</name>
    <name type="common">Marine centric diatom</name>
    <name type="synonym">Odontella sinensis</name>
    <dbReference type="NCBI Taxonomy" id="1514140"/>
    <lineage>
        <taxon>Eukaryota</taxon>
        <taxon>Sar</taxon>
        <taxon>Stramenopiles</taxon>
        <taxon>Ochrophyta</taxon>
        <taxon>Bacillariophyta</taxon>
        <taxon>Mediophyceae</taxon>
        <taxon>Biddulphiophycidae</taxon>
        <taxon>Eupodiscales</taxon>
        <taxon>Parodontellaceae</taxon>
        <taxon>Trieres</taxon>
    </lineage>
</organism>
<reference key="1">
    <citation type="submission" date="1993-05" db="EMBL/GenBank/DDBJ databases">
        <authorList>
            <person name="Kroth-Pancic P."/>
            <person name="Freier U."/>
            <person name="Strotmann H."/>
            <person name="Kowallik K.V."/>
        </authorList>
    </citation>
    <scope>NUCLEOTIDE SEQUENCE [GENOMIC DNA]</scope>
</reference>
<reference key="2">
    <citation type="journal article" date="1995" name="Plant Mol. Biol. Rep.">
        <title>The chloroplast genome of a chlorophyll a+c-containing alga, Odontella sinensis.</title>
        <authorList>
            <person name="Kowallik K.V."/>
            <person name="Stoebe B."/>
            <person name="Schaffran I."/>
            <person name="Kroth-Pancic P."/>
            <person name="Freier U."/>
        </authorList>
    </citation>
    <scope>NUCLEOTIDE SEQUENCE [LARGE SCALE GENOMIC DNA]</scope>
</reference>
<comment type="function">
    <text evidence="1">Produces ATP from ADP in the presence of a proton gradient across the membrane.</text>
</comment>
<comment type="subunit">
    <text evidence="1">F-type ATPases have 2 components, CF(1) - the catalytic core - and CF(0) - the membrane proton channel. CF(1) has five subunits: alpha(3), beta(3), gamma(1), delta(1), epsilon(1). CF(0) has three main subunits: a, b and c.</text>
</comment>
<comment type="subcellular location">
    <subcellularLocation>
        <location evidence="1">Plastid</location>
        <location evidence="1">Chloroplast thylakoid membrane</location>
        <topology evidence="1">Peripheral membrane protein</topology>
    </subcellularLocation>
</comment>
<comment type="similarity">
    <text evidence="1">Belongs to the ATPase epsilon chain family.</text>
</comment>
<feature type="chain" id="PRO_0000188278" description="ATP synthase epsilon chain, chloroplastic">
    <location>
        <begin position="1"/>
        <end position="133"/>
    </location>
</feature>